<name>RX24L_ARATH</name>
<protein>
    <recommendedName>
        <fullName>Probable disease resistance protein RXW24L</fullName>
    </recommendedName>
</protein>
<sequence length="899" mass="104333">MELVSFGVEKLWDRLSQEYDQFKGVEDQVTELKSNLNLLKSFLKDADAKKHISEMVRHCVEEIKDIVYDTEDIIETFILKEKVEMKRGIMKRIKRFASTIMDRRELASDIGGISKRISKVIQDMQSFGVQQIITDGSRSSHPLQERQREMRHTFSRDSENDFVGMEANVKKLVGYLVEKDDYQIVSLTGMGGLGKTTLARQVFNHDVVKDRFDGFAWVSVSQEFTRISVWQTILQNLTSKERKDEIQNMKEADLHDDLFRLLESSKTLIVLDDIWKEEDWDLIKPIFPPKKGWKVLLTSRTESIAMRGDTTYISFKPKCLSIPDSWTLFQSIAMPRKDTSEFKVDEEMENMGKKMIKHCGGLSLAVKVLGGLLAAKYTLHDWKRLSENIGSHIVERTSGNNSSIDHVLSVSFEELPNYLKHCFLYLAHFPEDHEIDVEKLHYYWAAEGISERRRYDGETIRDTGDSYIEELVRRNMVISERDVMTSRFETCRLHDMMREICLFKAKEENFLQIVSNHSPTSNPQTLGASRRFVLHNPTTLHVERYKNNPKLRSLVVVYDDIGNRRWMLSGSIFTRVKLLRVLDLVQAKFKGGKLPSDIGKLIHLRYLSLKDAKVSHLPSSLRNLVLLIYLDIRTDFTDIFVPNVFMGMRELRYLELPRFMHEKTKLELSNLEKLEALENFSTKSSSLEDLRGMVRLRTLVIILSEGTSLQTLSASVCGLRHLENFKIMENAGVNRMGEERMVLDFTYLKKLTLSIEMPRLPKIQHLPSHLTVLDLSYCCLEEDPMPILEKLLELKDLSLDYLSFSGRKMVCSAGGFPQLRKLALDEQEEWEEWIVEEGSMSRLHTLSIWSSTLKELPDGLRFIYSLKNLIMGKSWMERLSERGEEFYKVQNIPFIKFSS</sequence>
<reference key="1">
    <citation type="journal article" date="1999" name="Gene">
        <title>Isolation and analysis of cDNA within a 300 kb Arabidopsis thaliana genomic region located around the 100 map unit of chromosome 1.</title>
        <authorList>
            <person name="Kato A."/>
            <person name="Suzuki M."/>
            <person name="Kuwahara A."/>
            <person name="Ooe H."/>
            <person name="Higano-Inaba K."/>
            <person name="Komeda Y."/>
        </authorList>
    </citation>
    <scope>NUCLEOTIDE SEQUENCE [GENOMIC DNA]</scope>
    <scope>NUCLEOTIDE SEQUENCE [MRNA] OF 584-899</scope>
    <source>
        <strain>cv. Columbia</strain>
    </source>
</reference>
<reference key="2">
    <citation type="journal article" date="2000" name="Nature">
        <title>Sequence and analysis of chromosome 1 of the plant Arabidopsis thaliana.</title>
        <authorList>
            <person name="Theologis A."/>
            <person name="Ecker J.R."/>
            <person name="Palm C.J."/>
            <person name="Federspiel N.A."/>
            <person name="Kaul S."/>
            <person name="White O."/>
            <person name="Alonso J."/>
            <person name="Altafi H."/>
            <person name="Araujo R."/>
            <person name="Bowman C.L."/>
            <person name="Brooks S.Y."/>
            <person name="Buehler E."/>
            <person name="Chan A."/>
            <person name="Chao Q."/>
            <person name="Chen H."/>
            <person name="Cheuk R.F."/>
            <person name="Chin C.W."/>
            <person name="Chung M.K."/>
            <person name="Conn L."/>
            <person name="Conway A.B."/>
            <person name="Conway A.R."/>
            <person name="Creasy T.H."/>
            <person name="Dewar K."/>
            <person name="Dunn P."/>
            <person name="Etgu P."/>
            <person name="Feldblyum T.V."/>
            <person name="Feng J.-D."/>
            <person name="Fong B."/>
            <person name="Fujii C.Y."/>
            <person name="Gill J.E."/>
            <person name="Goldsmith A.D."/>
            <person name="Haas B."/>
            <person name="Hansen N.F."/>
            <person name="Hughes B."/>
            <person name="Huizar L."/>
            <person name="Hunter J.L."/>
            <person name="Jenkins J."/>
            <person name="Johnson-Hopson C."/>
            <person name="Khan S."/>
            <person name="Khaykin E."/>
            <person name="Kim C.J."/>
            <person name="Koo H.L."/>
            <person name="Kremenetskaia I."/>
            <person name="Kurtz D.B."/>
            <person name="Kwan A."/>
            <person name="Lam B."/>
            <person name="Langin-Hooper S."/>
            <person name="Lee A."/>
            <person name="Lee J.M."/>
            <person name="Lenz C.A."/>
            <person name="Li J.H."/>
            <person name="Li Y.-P."/>
            <person name="Lin X."/>
            <person name="Liu S.X."/>
            <person name="Liu Z.A."/>
            <person name="Luros J.S."/>
            <person name="Maiti R."/>
            <person name="Marziali A."/>
            <person name="Militscher J."/>
            <person name="Miranda M."/>
            <person name="Nguyen M."/>
            <person name="Nierman W.C."/>
            <person name="Osborne B.I."/>
            <person name="Pai G."/>
            <person name="Peterson J."/>
            <person name="Pham P.K."/>
            <person name="Rizzo M."/>
            <person name="Rooney T."/>
            <person name="Rowley D."/>
            <person name="Sakano H."/>
            <person name="Salzberg S.L."/>
            <person name="Schwartz J.R."/>
            <person name="Shinn P."/>
            <person name="Southwick A.M."/>
            <person name="Sun H."/>
            <person name="Tallon L.J."/>
            <person name="Tambunga G."/>
            <person name="Toriumi M.J."/>
            <person name="Town C.D."/>
            <person name="Utterback T."/>
            <person name="Van Aken S."/>
            <person name="Vaysberg M."/>
            <person name="Vysotskaia V.S."/>
            <person name="Walker M."/>
            <person name="Wu D."/>
            <person name="Yu G."/>
            <person name="Fraser C.M."/>
            <person name="Venter J.C."/>
            <person name="Davis R.W."/>
        </authorList>
    </citation>
    <scope>NUCLEOTIDE SEQUENCE [LARGE SCALE GENOMIC DNA]</scope>
    <source>
        <strain>cv. Columbia</strain>
    </source>
</reference>
<reference key="3">
    <citation type="journal article" date="2017" name="Plant J.">
        <title>Araport11: a complete reannotation of the Arabidopsis thaliana reference genome.</title>
        <authorList>
            <person name="Cheng C.Y."/>
            <person name="Krishnakumar V."/>
            <person name="Chan A.P."/>
            <person name="Thibaud-Nissen F."/>
            <person name="Schobel S."/>
            <person name="Town C.D."/>
        </authorList>
    </citation>
    <scope>GENOME REANNOTATION</scope>
    <source>
        <strain>cv. Columbia</strain>
    </source>
</reference>
<organism>
    <name type="scientific">Arabidopsis thaliana</name>
    <name type="common">Mouse-ear cress</name>
    <dbReference type="NCBI Taxonomy" id="3702"/>
    <lineage>
        <taxon>Eukaryota</taxon>
        <taxon>Viridiplantae</taxon>
        <taxon>Streptophyta</taxon>
        <taxon>Embryophyta</taxon>
        <taxon>Tracheophyta</taxon>
        <taxon>Spermatophyta</taxon>
        <taxon>Magnoliopsida</taxon>
        <taxon>eudicotyledons</taxon>
        <taxon>Gunneridae</taxon>
        <taxon>Pentapetalae</taxon>
        <taxon>rosids</taxon>
        <taxon>malvids</taxon>
        <taxon>Brassicales</taxon>
        <taxon>Brassicaceae</taxon>
        <taxon>Camelineae</taxon>
        <taxon>Arabidopsis</taxon>
    </lineage>
</organism>
<gene>
    <name type="primary">RXW24L</name>
    <name type="ordered locus">At1g58410</name>
    <name type="ORF">F9K23.6</name>
    <name type="ORF">X7J.10</name>
</gene>
<evidence type="ECO:0000250" key="1"/>
<evidence type="ECO:0000255" key="2"/>
<evidence type="ECO:0000305" key="3"/>
<proteinExistence type="evidence at transcript level"/>
<accession>Q9C646</accession>
<accession>Q9SM04</accession>
<keyword id="KW-0067">ATP-binding</keyword>
<keyword id="KW-0175">Coiled coil</keyword>
<keyword id="KW-0547">Nucleotide-binding</keyword>
<keyword id="KW-0611">Plant defense</keyword>
<keyword id="KW-1185">Reference proteome</keyword>
<keyword id="KW-0677">Repeat</keyword>
<feature type="chain" id="PRO_0000212776" description="Probable disease resistance protein RXW24L">
    <location>
        <begin position="1"/>
        <end position="899"/>
    </location>
</feature>
<feature type="domain" description="NB-ARC">
    <location>
        <begin position="143"/>
        <end position="455"/>
    </location>
</feature>
<feature type="coiled-coil region" evidence="2">
    <location>
        <begin position="13"/>
        <end position="50"/>
    </location>
</feature>
<feature type="binding site" evidence="2">
    <location>
        <begin position="189"/>
        <end position="196"/>
    </location>
    <ligand>
        <name>ATP</name>
        <dbReference type="ChEBI" id="CHEBI:30616"/>
    </ligand>
</feature>
<comment type="function">
    <text>Potential disease resistance protein.</text>
</comment>
<comment type="domain">
    <text evidence="1">The LRR repeats probably act as specificity determinant of pathogen recognition.</text>
</comment>
<comment type="similarity">
    <text evidence="3">Belongs to the disease resistance NB-LRR family.</text>
</comment>
<comment type="online information" name="NIB-LRRS">
    <link uri="http://niblrrs.ucdavis.edu"/>
    <text>Functional and comparative genomics of disease resistance gene homologs</text>
</comment>
<dbReference type="EMBL" id="AB008019">
    <property type="protein sequence ID" value="BAA88266.1"/>
    <property type="molecule type" value="mRNA"/>
</dbReference>
<dbReference type="EMBL" id="AB077822">
    <property type="protein sequence ID" value="BAB83873.1"/>
    <property type="molecule type" value="Genomic_DNA"/>
</dbReference>
<dbReference type="EMBL" id="AC082643">
    <property type="protein sequence ID" value="AAG50648.1"/>
    <property type="molecule type" value="Genomic_DNA"/>
</dbReference>
<dbReference type="EMBL" id="CP002684">
    <property type="protein sequence ID" value="AEE33546.1"/>
    <property type="molecule type" value="Genomic_DNA"/>
</dbReference>
<dbReference type="EMBL" id="CP002684">
    <property type="protein sequence ID" value="ANM61068.1"/>
    <property type="molecule type" value="Genomic_DNA"/>
</dbReference>
<dbReference type="EMBL" id="CP002684">
    <property type="protein sequence ID" value="ANM61069.1"/>
    <property type="molecule type" value="Genomic_DNA"/>
</dbReference>
<dbReference type="PIR" id="H96617">
    <property type="entry name" value="H96617"/>
</dbReference>
<dbReference type="PIR" id="T52464">
    <property type="entry name" value="T52464"/>
</dbReference>
<dbReference type="RefSeq" id="NP_001319267.1">
    <property type="nucleotide sequence ID" value="NM_001333834.1"/>
</dbReference>
<dbReference type="RefSeq" id="NP_001323309.1">
    <property type="nucleotide sequence ID" value="NM_001333835.1"/>
</dbReference>
<dbReference type="RefSeq" id="NP_176137.1">
    <property type="nucleotide sequence ID" value="NM_104621.1"/>
</dbReference>
<dbReference type="SMR" id="Q9C646"/>
<dbReference type="STRING" id="3702.Q9C646"/>
<dbReference type="PaxDb" id="3702-AT1G58410.1"/>
<dbReference type="EnsemblPlants" id="AT1G58410.1">
    <property type="protein sequence ID" value="AT1G58410.1"/>
    <property type="gene ID" value="AT1G58410"/>
</dbReference>
<dbReference type="EnsemblPlants" id="AT1G58410.2">
    <property type="protein sequence ID" value="AT1G58410.2"/>
    <property type="gene ID" value="AT1G58410"/>
</dbReference>
<dbReference type="EnsemblPlants" id="AT1G58410.4">
    <property type="protein sequence ID" value="AT1G58410.4"/>
    <property type="gene ID" value="AT1G58410"/>
</dbReference>
<dbReference type="GeneID" id="842210"/>
<dbReference type="Gramene" id="AT1G58410.1">
    <property type="protein sequence ID" value="AT1G58410.1"/>
    <property type="gene ID" value="AT1G58410"/>
</dbReference>
<dbReference type="Gramene" id="AT1G58410.2">
    <property type="protein sequence ID" value="AT1G58410.2"/>
    <property type="gene ID" value="AT1G58410"/>
</dbReference>
<dbReference type="Gramene" id="AT1G58410.4">
    <property type="protein sequence ID" value="AT1G58410.4"/>
    <property type="gene ID" value="AT1G58410"/>
</dbReference>
<dbReference type="KEGG" id="ath:AT1G58410"/>
<dbReference type="Araport" id="AT1G58410"/>
<dbReference type="TAIR" id="AT1G58410"/>
<dbReference type="eggNOG" id="KOG4658">
    <property type="taxonomic scope" value="Eukaryota"/>
</dbReference>
<dbReference type="HOGENOM" id="CLU_000837_25_4_1"/>
<dbReference type="InParanoid" id="Q9C646"/>
<dbReference type="OMA" id="YIYASAC"/>
<dbReference type="PhylomeDB" id="Q9C646"/>
<dbReference type="PRO" id="PR:Q9C646"/>
<dbReference type="Proteomes" id="UP000006548">
    <property type="component" value="Chromosome 1"/>
</dbReference>
<dbReference type="ExpressionAtlas" id="Q9C646">
    <property type="expression patterns" value="baseline and differential"/>
</dbReference>
<dbReference type="GO" id="GO:0043531">
    <property type="term" value="F:ADP binding"/>
    <property type="evidence" value="ECO:0007669"/>
    <property type="project" value="InterPro"/>
</dbReference>
<dbReference type="GO" id="GO:0005524">
    <property type="term" value="F:ATP binding"/>
    <property type="evidence" value="ECO:0007669"/>
    <property type="project" value="UniProtKB-KW"/>
</dbReference>
<dbReference type="GO" id="GO:0006952">
    <property type="term" value="P:defense response"/>
    <property type="evidence" value="ECO:0007669"/>
    <property type="project" value="UniProtKB-KW"/>
</dbReference>
<dbReference type="GO" id="GO:0051707">
    <property type="term" value="P:response to other organism"/>
    <property type="evidence" value="ECO:0007669"/>
    <property type="project" value="UniProtKB-ARBA"/>
</dbReference>
<dbReference type="CDD" id="cd14798">
    <property type="entry name" value="RX-CC_like"/>
    <property type="match status" value="1"/>
</dbReference>
<dbReference type="FunFam" id="3.40.50.300:FF:001091">
    <property type="entry name" value="Probable disease resistance protein At1g61300"/>
    <property type="match status" value="1"/>
</dbReference>
<dbReference type="FunFam" id="1.10.10.10:FF:000322">
    <property type="entry name" value="Probable disease resistance protein At1g63360"/>
    <property type="match status" value="1"/>
</dbReference>
<dbReference type="FunFam" id="1.10.8.430:FF:000003">
    <property type="entry name" value="Probable disease resistance protein At5g66910"/>
    <property type="match status" value="1"/>
</dbReference>
<dbReference type="Gene3D" id="1.20.5.4130">
    <property type="match status" value="1"/>
</dbReference>
<dbReference type="Gene3D" id="1.10.8.430">
    <property type="entry name" value="Helical domain of apoptotic protease-activating factors"/>
    <property type="match status" value="1"/>
</dbReference>
<dbReference type="Gene3D" id="3.40.50.300">
    <property type="entry name" value="P-loop containing nucleotide triphosphate hydrolases"/>
    <property type="match status" value="1"/>
</dbReference>
<dbReference type="Gene3D" id="3.80.10.10">
    <property type="entry name" value="Ribonuclease Inhibitor"/>
    <property type="match status" value="1"/>
</dbReference>
<dbReference type="Gene3D" id="1.10.10.10">
    <property type="entry name" value="Winged helix-like DNA-binding domain superfamily/Winged helix DNA-binding domain"/>
    <property type="match status" value="1"/>
</dbReference>
<dbReference type="InterPro" id="IPR042197">
    <property type="entry name" value="Apaf_helical"/>
</dbReference>
<dbReference type="InterPro" id="IPR044974">
    <property type="entry name" value="Disease_R_plants"/>
</dbReference>
<dbReference type="InterPro" id="IPR032675">
    <property type="entry name" value="LRR_dom_sf"/>
</dbReference>
<dbReference type="InterPro" id="IPR055414">
    <property type="entry name" value="LRR_R13L4/SHOC2-like"/>
</dbReference>
<dbReference type="InterPro" id="IPR002182">
    <property type="entry name" value="NB-ARC"/>
</dbReference>
<dbReference type="InterPro" id="IPR027417">
    <property type="entry name" value="P-loop_NTPase"/>
</dbReference>
<dbReference type="InterPro" id="IPR038005">
    <property type="entry name" value="RX-like_CC"/>
</dbReference>
<dbReference type="InterPro" id="IPR041118">
    <property type="entry name" value="Rx_N"/>
</dbReference>
<dbReference type="InterPro" id="IPR036388">
    <property type="entry name" value="WH-like_DNA-bd_sf"/>
</dbReference>
<dbReference type="PANTHER" id="PTHR23155">
    <property type="entry name" value="DISEASE RESISTANCE PROTEIN RP"/>
    <property type="match status" value="1"/>
</dbReference>
<dbReference type="PANTHER" id="PTHR23155:SF1185">
    <property type="entry name" value="DISEASE RESISTANCE RPP8-LIKE PROTEIN 3-RELATED"/>
    <property type="match status" value="1"/>
</dbReference>
<dbReference type="Pfam" id="PF23598">
    <property type="entry name" value="LRR_14"/>
    <property type="match status" value="1"/>
</dbReference>
<dbReference type="Pfam" id="PF00931">
    <property type="entry name" value="NB-ARC"/>
    <property type="match status" value="1"/>
</dbReference>
<dbReference type="Pfam" id="PF18052">
    <property type="entry name" value="Rx_N"/>
    <property type="match status" value="1"/>
</dbReference>
<dbReference type="Pfam" id="PF23559">
    <property type="entry name" value="WH_DRP"/>
    <property type="match status" value="1"/>
</dbReference>
<dbReference type="PRINTS" id="PR00364">
    <property type="entry name" value="DISEASERSIST"/>
</dbReference>
<dbReference type="SUPFAM" id="SSF52058">
    <property type="entry name" value="L domain-like"/>
    <property type="match status" value="1"/>
</dbReference>
<dbReference type="SUPFAM" id="SSF52540">
    <property type="entry name" value="P-loop containing nucleoside triphosphate hydrolases"/>
    <property type="match status" value="1"/>
</dbReference>